<comment type="function">
    <text evidence="2">With S4 and S5 plays an important role in translational accuracy.</text>
</comment>
<comment type="function">
    <text evidence="2">Interacts with and stabilizes bases of the 16S rRNA that are involved in tRNA selection in the A site and with the mRNA backbone. Located at the interface of the 30S and 50S subunits, it traverses the body of the 30S subunit contacting proteins on the other side and probably holding the rRNA structure together. The combined cluster of proteins S8, S12 and S17 appears to hold together the shoulder and platform of the 30S subunit.</text>
</comment>
<comment type="subunit">
    <text evidence="2">Part of the 30S ribosomal subunit. Contacts proteins S8 and S17. May interact with IF1 in the 30S initiation complex.</text>
</comment>
<comment type="similarity">
    <text evidence="2">Belongs to the universal ribosomal protein uS12 family.</text>
</comment>
<name>RS12_PARS2</name>
<dbReference type="EMBL" id="CP000820">
    <property type="protein sequence ID" value="ABW15398.1"/>
    <property type="molecule type" value="Genomic_DNA"/>
</dbReference>
<dbReference type="RefSeq" id="WP_009740532.1">
    <property type="nucleotide sequence ID" value="NC_009921.1"/>
</dbReference>
<dbReference type="SMR" id="A8LC61"/>
<dbReference type="STRING" id="298653.Franean1_6054"/>
<dbReference type="KEGG" id="fre:Franean1_6054"/>
<dbReference type="eggNOG" id="COG0048">
    <property type="taxonomic scope" value="Bacteria"/>
</dbReference>
<dbReference type="HOGENOM" id="CLU_104295_1_2_11"/>
<dbReference type="GO" id="GO:0015935">
    <property type="term" value="C:small ribosomal subunit"/>
    <property type="evidence" value="ECO:0007669"/>
    <property type="project" value="InterPro"/>
</dbReference>
<dbReference type="GO" id="GO:0019843">
    <property type="term" value="F:rRNA binding"/>
    <property type="evidence" value="ECO:0007669"/>
    <property type="project" value="UniProtKB-UniRule"/>
</dbReference>
<dbReference type="GO" id="GO:0003735">
    <property type="term" value="F:structural constituent of ribosome"/>
    <property type="evidence" value="ECO:0007669"/>
    <property type="project" value="InterPro"/>
</dbReference>
<dbReference type="GO" id="GO:0000049">
    <property type="term" value="F:tRNA binding"/>
    <property type="evidence" value="ECO:0007669"/>
    <property type="project" value="UniProtKB-UniRule"/>
</dbReference>
<dbReference type="GO" id="GO:0006412">
    <property type="term" value="P:translation"/>
    <property type="evidence" value="ECO:0007669"/>
    <property type="project" value="UniProtKB-UniRule"/>
</dbReference>
<dbReference type="CDD" id="cd03368">
    <property type="entry name" value="Ribosomal_S12"/>
    <property type="match status" value="1"/>
</dbReference>
<dbReference type="FunFam" id="2.40.50.140:FF:000001">
    <property type="entry name" value="30S ribosomal protein S12"/>
    <property type="match status" value="1"/>
</dbReference>
<dbReference type="Gene3D" id="2.40.50.140">
    <property type="entry name" value="Nucleic acid-binding proteins"/>
    <property type="match status" value="1"/>
</dbReference>
<dbReference type="HAMAP" id="MF_00403_B">
    <property type="entry name" value="Ribosomal_uS12_B"/>
    <property type="match status" value="1"/>
</dbReference>
<dbReference type="InterPro" id="IPR012340">
    <property type="entry name" value="NA-bd_OB-fold"/>
</dbReference>
<dbReference type="InterPro" id="IPR006032">
    <property type="entry name" value="Ribosomal_uS12"/>
</dbReference>
<dbReference type="InterPro" id="IPR005679">
    <property type="entry name" value="Ribosomal_uS12_bac"/>
</dbReference>
<dbReference type="NCBIfam" id="TIGR00981">
    <property type="entry name" value="rpsL_bact"/>
    <property type="match status" value="1"/>
</dbReference>
<dbReference type="PANTHER" id="PTHR11652">
    <property type="entry name" value="30S RIBOSOMAL PROTEIN S12 FAMILY MEMBER"/>
    <property type="match status" value="1"/>
</dbReference>
<dbReference type="Pfam" id="PF00164">
    <property type="entry name" value="Ribosom_S12_S23"/>
    <property type="match status" value="1"/>
</dbReference>
<dbReference type="PIRSF" id="PIRSF002133">
    <property type="entry name" value="Ribosomal_S12/S23"/>
    <property type="match status" value="1"/>
</dbReference>
<dbReference type="PRINTS" id="PR01034">
    <property type="entry name" value="RIBOSOMALS12"/>
</dbReference>
<dbReference type="SUPFAM" id="SSF50249">
    <property type="entry name" value="Nucleic acid-binding proteins"/>
    <property type="match status" value="1"/>
</dbReference>
<dbReference type="PROSITE" id="PS00055">
    <property type="entry name" value="RIBOSOMAL_S12"/>
    <property type="match status" value="1"/>
</dbReference>
<reference key="1">
    <citation type="journal article" date="2007" name="Genome Res.">
        <title>Genome characteristics of facultatively symbiotic Frankia sp. strains reflect host range and host plant biogeography.</title>
        <authorList>
            <person name="Normand P."/>
            <person name="Lapierre P."/>
            <person name="Tisa L.S."/>
            <person name="Gogarten J.P."/>
            <person name="Alloisio N."/>
            <person name="Bagnarol E."/>
            <person name="Bassi C.A."/>
            <person name="Berry A.M."/>
            <person name="Bickhart D.M."/>
            <person name="Choisne N."/>
            <person name="Couloux A."/>
            <person name="Cournoyer B."/>
            <person name="Cruveiller S."/>
            <person name="Daubin V."/>
            <person name="Demange N."/>
            <person name="Francino M.P."/>
            <person name="Goltsman E."/>
            <person name="Huang Y."/>
            <person name="Kopp O.R."/>
            <person name="Labarre L."/>
            <person name="Lapidus A."/>
            <person name="Lavire C."/>
            <person name="Marechal J."/>
            <person name="Martinez M."/>
            <person name="Mastronunzio J.E."/>
            <person name="Mullin B.C."/>
            <person name="Niemann J."/>
            <person name="Pujic P."/>
            <person name="Rawnsley T."/>
            <person name="Rouy Z."/>
            <person name="Schenowitz C."/>
            <person name="Sellstedt A."/>
            <person name="Tavares F."/>
            <person name="Tomkins J.P."/>
            <person name="Vallenet D."/>
            <person name="Valverde C."/>
            <person name="Wall L.G."/>
            <person name="Wang Y."/>
            <person name="Medigue C."/>
            <person name="Benson D.R."/>
        </authorList>
    </citation>
    <scope>NUCLEOTIDE SEQUENCE [LARGE SCALE GENOMIC DNA]</scope>
    <source>
        <strain>EAN1pec</strain>
    </source>
</reference>
<accession>A8LC61</accession>
<evidence type="ECO:0000250" key="1"/>
<evidence type="ECO:0000255" key="2">
    <source>
        <dbReference type="HAMAP-Rule" id="MF_00403"/>
    </source>
</evidence>
<evidence type="ECO:0000256" key="3">
    <source>
        <dbReference type="SAM" id="MobiDB-lite"/>
    </source>
</evidence>
<evidence type="ECO:0000305" key="4"/>
<protein>
    <recommendedName>
        <fullName evidence="2">Small ribosomal subunit protein uS12</fullName>
    </recommendedName>
    <alternativeName>
        <fullName evidence="4">30S ribosomal protein S12</fullName>
    </alternativeName>
</protein>
<sequence length="124" mass="13811">MPTIQQLVRKGRQDKVEKTKTPALKGSPQRRGVCTRVYTTTPKKPNSALRKVARVRLNSGIEVTAYIPGVGHNLQEHSIVLVRGGRVKDLPGVRYKIVRGALDTQGVRNRKQARSRYGAKKEKG</sequence>
<gene>
    <name evidence="2" type="primary">rpsL</name>
    <name type="ordered locus">Franean1_6054</name>
</gene>
<keyword id="KW-0488">Methylation</keyword>
<keyword id="KW-0687">Ribonucleoprotein</keyword>
<keyword id="KW-0689">Ribosomal protein</keyword>
<keyword id="KW-0694">RNA-binding</keyword>
<keyword id="KW-0699">rRNA-binding</keyword>
<keyword id="KW-0820">tRNA-binding</keyword>
<feature type="chain" id="PRO_1000194172" description="Small ribosomal subunit protein uS12">
    <location>
        <begin position="1"/>
        <end position="124"/>
    </location>
</feature>
<feature type="region of interest" description="Disordered" evidence="3">
    <location>
        <begin position="1"/>
        <end position="32"/>
    </location>
</feature>
<feature type="compositionally biased region" description="Basic and acidic residues" evidence="3">
    <location>
        <begin position="11"/>
        <end position="20"/>
    </location>
</feature>
<feature type="modified residue" description="3-methylthioaspartic acid" evidence="1">
    <location>
        <position position="89"/>
    </location>
</feature>
<organism>
    <name type="scientific">Parafrankia sp. (strain EAN1pec)</name>
    <dbReference type="NCBI Taxonomy" id="298653"/>
    <lineage>
        <taxon>Bacteria</taxon>
        <taxon>Bacillati</taxon>
        <taxon>Actinomycetota</taxon>
        <taxon>Actinomycetes</taxon>
        <taxon>Frankiales</taxon>
        <taxon>Frankiaceae</taxon>
        <taxon>Parafrankia</taxon>
    </lineage>
</organism>
<proteinExistence type="inferred from homology"/>